<organism>
    <name type="scientific">Sphingobium wenxiniae (strain DSM 21828 / CGMCC 1.7748 / JZ-1)</name>
    <dbReference type="NCBI Taxonomy" id="595605"/>
    <lineage>
        <taxon>Bacteria</taxon>
        <taxon>Pseudomonadati</taxon>
        <taxon>Pseudomonadota</taxon>
        <taxon>Alphaproteobacteria</taxon>
        <taxon>Sphingomonadales</taxon>
        <taxon>Sphingomonadaceae</taxon>
        <taxon>Sphingobium</taxon>
    </lineage>
</organism>
<protein>
    <recommendedName>
        <fullName>Pyrethroid hydrolase</fullName>
        <ecNumber>3.1.1.88</ecNumber>
    </recommendedName>
</protein>
<evidence type="ECO:0000250" key="1"/>
<evidence type="ECO:0000256" key="2">
    <source>
        <dbReference type="SAM" id="MobiDB-lite"/>
    </source>
</evidence>
<evidence type="ECO:0000269" key="3">
    <source>
    </source>
</evidence>
<evidence type="ECO:0000305" key="4"/>
<proteinExistence type="evidence at protein level"/>
<accession>C0LA90</accession>
<sequence length="280" mass="30012">MTVTDIILIHGALNRGACYDAVVPLLEARGYRVHAPDLTGHTPGDGGHLSVVDMEHYTRPVADILARAEGQSILLGHSLGGASISWLAQHHPDKVAGLIYLTAVLTAPGITPETFVLPGEPNRGTPHALDLIQPVDEGRGLQADFSRLERLREVFMGDYPGEGMPPAEQFIQTQSTVPFGTPNPMEGRALEIPRLYIEALDDVVIPIAVQRQMQKEFPGPVAVVSLPASHAPYYSMPERLAEAIADFADAPAEYRQTATKAGPDRPAGADGGRADRADLP</sequence>
<feature type="chain" id="PRO_0000424212" description="Pyrethroid hydrolase">
    <location>
        <begin position="1"/>
        <end position="280"/>
    </location>
</feature>
<feature type="region of interest" description="Disordered" evidence="2">
    <location>
        <begin position="254"/>
        <end position="280"/>
    </location>
</feature>
<feature type="active site" description="Charge relay system" evidence="1">
    <location>
        <position position="202"/>
    </location>
</feature>
<feature type="active site" description="Charge relay system" evidence="1">
    <location>
        <position position="230"/>
    </location>
</feature>
<gene>
    <name type="primary">pytH</name>
</gene>
<comment type="function">
    <text evidence="3">Catalyzes the hydrolysis of pyrethroids pesticides. Catalyzes the hydrolysis of cypermethrin to equimolar amounts of cyano-3-phenoxybenzyl alcohol and 2,2-dimethyl-3-(2,2-dichlorovinyl)-cyclopropanecarboxylic acid. Hydrolyzes cis-permethrin at approximately equal rate to trans-permethrin.</text>
</comment>
<comment type="catalytic activity">
    <reaction evidence="3">
        <text>(-)-trans-permethrin + H2O = (3-phenoxyphenyl)methanol + (1S,3R)-3-(2,2-dichlorovinyl)-2,2-dimethylcyclopropanecarboxylate + H(+)</text>
        <dbReference type="Rhea" id="RHEA:30283"/>
        <dbReference type="ChEBI" id="CHEBI:15377"/>
        <dbReference type="ChEBI" id="CHEBI:15378"/>
        <dbReference type="ChEBI" id="CHEBI:62523"/>
        <dbReference type="ChEBI" id="CHEBI:62527"/>
        <dbReference type="ChEBI" id="CHEBI:62531"/>
        <dbReference type="EC" id="3.1.1.88"/>
    </reaction>
</comment>
<comment type="biophysicochemical properties">
    <kinetics>
        <KM evidence="3">0.062 uM for trans-Permethrin</KM>
        <KM evidence="3">0.065 uM for cis-Permethrin</KM>
        <KM evidence="3">0.106 uM for Fenpropathrin</KM>
        <KM evidence="3">0.11 uM for trans-Cypermethrin</KM>
        <KM evidence="3">0.108 uM for cis-Cypermethrin</KM>
        <KM evidence="3">0.348 uM for Cyhalothrin</KM>
        <KM evidence="3">0.585 uM for Fenvalerate</KM>
        <KM evidence="3">0.788 uM for Deltamethrin</KM>
        <KM evidence="3">1.586 uM for Bifenthrin</KM>
        <KM evidence="3">124 uM for p-Nitrophenyl acetate</KM>
        <KM evidence="3">176 uM for p-Nitrophenyl butyrate</KM>
        <KM evidence="3">325 uM for p-Nitrophenyl caproate</KM>
        <text>kcat is 3.03 sec(-1) with trans-Permethrin acetate as substrate. kcat is 3.00 sec(-1) with cis-Permethrin acetate as substrate. kcat is 2.61 sec(-1) with Fenpropathrin acetate as substrate. kcat is 2.53 sec(-1) with trans-Cypermethrin acetate as substrate. kcat is 2.57 sec(-1) with cis-Cypermethrin acetate as substrate. kcat is 1.28 sec(-1) with Cyhalothrin acetate as substrate. kcat is 0.91 sec(-1) with Fenvalerate acetate as substrate. kcat is 0.79 sec(-1) with Deltamethrin acetate as substrate. kcat is 0.44 sec(-1) with Bifenthrin acetate as substrate. kcat is 183 sec(-1) with p-Nitrophenyl acetate as substrate. kcat is 118 sec(-1) with p-Nitrophenyl butyrate acetate as substrate. kcat is 49 sec(-1) with p-Nitrophenyl caproate acetate as substrate.</text>
    </kinetics>
    <phDependence>
        <text evidence="3">Optimum pH is 7.5.</text>
    </phDependence>
</comment>
<comment type="subunit">
    <text evidence="3">Monomer.</text>
</comment>
<comment type="similarity">
    <text evidence="4">Belongs to the AB hydrolase superfamily.</text>
</comment>
<name>PYRHY_SPHWJ</name>
<dbReference type="EC" id="3.1.1.88"/>
<dbReference type="EMBL" id="FJ688006">
    <property type="protein sequence ID" value="ACM79141.1"/>
    <property type="molecule type" value="Genomic_DNA"/>
</dbReference>
<dbReference type="SMR" id="C0LA90"/>
<dbReference type="ESTHER" id="sphwj-c0la90">
    <property type="family name" value="HNLyase_Bact"/>
</dbReference>
<dbReference type="KEGG" id="ag:ACM79141"/>
<dbReference type="BRENDA" id="3.1.1.88">
    <property type="organism ID" value="7695"/>
</dbReference>
<dbReference type="SABIO-RK" id="C0LA90"/>
<dbReference type="GO" id="GO:0080030">
    <property type="term" value="F:methyl indole-3-acetate esterase activity"/>
    <property type="evidence" value="ECO:0007669"/>
    <property type="project" value="TreeGrafter"/>
</dbReference>
<dbReference type="GO" id="GO:0080032">
    <property type="term" value="F:methyl jasmonate esterase activity"/>
    <property type="evidence" value="ECO:0007669"/>
    <property type="project" value="TreeGrafter"/>
</dbReference>
<dbReference type="GO" id="GO:0080031">
    <property type="term" value="F:methyl salicylate esterase activity"/>
    <property type="evidence" value="ECO:0007669"/>
    <property type="project" value="TreeGrafter"/>
</dbReference>
<dbReference type="GO" id="GO:0102209">
    <property type="term" value="F:trans-permethrin hydrolase activity"/>
    <property type="evidence" value="ECO:0007669"/>
    <property type="project" value="UniProtKB-EC"/>
</dbReference>
<dbReference type="GO" id="GO:0009694">
    <property type="term" value="P:jasmonic acid metabolic process"/>
    <property type="evidence" value="ECO:0007669"/>
    <property type="project" value="TreeGrafter"/>
</dbReference>
<dbReference type="GO" id="GO:0009696">
    <property type="term" value="P:salicylic acid metabolic process"/>
    <property type="evidence" value="ECO:0007669"/>
    <property type="project" value="TreeGrafter"/>
</dbReference>
<dbReference type="Gene3D" id="3.40.50.1820">
    <property type="entry name" value="alpha/beta hydrolase"/>
    <property type="match status" value="1"/>
</dbReference>
<dbReference type="InterPro" id="IPR000073">
    <property type="entry name" value="AB_hydrolase_1"/>
</dbReference>
<dbReference type="InterPro" id="IPR029058">
    <property type="entry name" value="AB_hydrolase_fold"/>
</dbReference>
<dbReference type="InterPro" id="IPR045889">
    <property type="entry name" value="MES/HNL"/>
</dbReference>
<dbReference type="PANTHER" id="PTHR10992:SF872">
    <property type="entry name" value="METHYLESTERASE 11, CHLOROPLASTIC-RELATED"/>
    <property type="match status" value="1"/>
</dbReference>
<dbReference type="PANTHER" id="PTHR10992">
    <property type="entry name" value="METHYLESTERASE FAMILY MEMBER"/>
    <property type="match status" value="1"/>
</dbReference>
<dbReference type="Pfam" id="PF12697">
    <property type="entry name" value="Abhydrolase_6"/>
    <property type="match status" value="1"/>
</dbReference>
<dbReference type="PRINTS" id="PR00111">
    <property type="entry name" value="ABHYDROLASE"/>
</dbReference>
<dbReference type="SUPFAM" id="SSF53474">
    <property type="entry name" value="alpha/beta-Hydrolases"/>
    <property type="match status" value="1"/>
</dbReference>
<reference key="1">
    <citation type="journal article" date="2009" name="Appl. Environ. Microbiol.">
        <title>Cloning of a novel pyrethroid-hydrolyzing carboxylesterase gene from Sphingobium sp. strain JZ-1 and characterization of the gene product.</title>
        <authorList>
            <person name="Wang B.Z."/>
            <person name="Guo P."/>
            <person name="Hang B.J."/>
            <person name="Li L."/>
            <person name="He J."/>
            <person name="Li S.P."/>
        </authorList>
    </citation>
    <scope>NUCLEOTIDE SEQUENCE [GENOMIC DNA]</scope>
    <scope>FUNCTION</scope>
    <scope>CATALYTIC ACTIVITY</scope>
    <scope>BIOPHYSICOCHEMICAL PROPERTIES</scope>
    <scope>SUBUNIT</scope>
</reference>
<keyword id="KW-0378">Hydrolase</keyword>
<keyword id="KW-0719">Serine esterase</keyword>